<evidence type="ECO:0000255" key="1">
    <source>
        <dbReference type="HAMAP-Rule" id="MF_00456"/>
    </source>
</evidence>
<reference key="1">
    <citation type="journal article" date="2010" name="Genome Biol.">
        <title>Structure and dynamics of the pan-genome of Streptococcus pneumoniae and closely related species.</title>
        <authorList>
            <person name="Donati C."/>
            <person name="Hiller N.L."/>
            <person name="Tettelin H."/>
            <person name="Muzzi A."/>
            <person name="Croucher N.J."/>
            <person name="Angiuoli S.V."/>
            <person name="Oggioni M."/>
            <person name="Dunning Hotopp J.C."/>
            <person name="Hu F.Z."/>
            <person name="Riley D.R."/>
            <person name="Covacci A."/>
            <person name="Mitchell T.J."/>
            <person name="Bentley S.D."/>
            <person name="Kilian M."/>
            <person name="Ehrlich G.D."/>
            <person name="Rappuoli R."/>
            <person name="Moxon E.R."/>
            <person name="Masignani V."/>
        </authorList>
    </citation>
    <scope>NUCLEOTIDE SEQUENCE [LARGE SCALE GENOMIC DNA]</scope>
    <source>
        <strain>Hungary19A-6</strain>
    </source>
</reference>
<protein>
    <recommendedName>
        <fullName evidence="1">Glutamate 5-kinase</fullName>
        <ecNumber evidence="1">2.7.2.11</ecNumber>
    </recommendedName>
    <alternativeName>
        <fullName evidence="1">Gamma-glutamyl kinase</fullName>
        <shortName evidence="1">GK</shortName>
    </alternativeName>
</protein>
<organism>
    <name type="scientific">Streptococcus pneumoniae (strain Hungary19A-6)</name>
    <dbReference type="NCBI Taxonomy" id="487214"/>
    <lineage>
        <taxon>Bacteria</taxon>
        <taxon>Bacillati</taxon>
        <taxon>Bacillota</taxon>
        <taxon>Bacilli</taxon>
        <taxon>Lactobacillales</taxon>
        <taxon>Streptococcaceae</taxon>
        <taxon>Streptococcus</taxon>
    </lineage>
</organism>
<name>PROB_STRPI</name>
<proteinExistence type="inferred from homology"/>
<sequence>MKYKRIVFKVGTSSLTNEDGSLSRSKVKDITQQLAMLHEAGHELILVSSGAIAAGFGALGFKKRPTKIADKQASAAVGQGLLLEEYTTNLLLRQIVSAQILLTQDDFVDKRRYKNAHQALSVLLNRGAIPIINENDSVVIDEVKVGDNDTLSAQVAAMVQADLLVLLTDVDGLYTGNPNSDPRAKRLERIETINREIIDMAGGAGSSNGTGGMLTKIKAATIATESGVPVYICSSLKSDSMIEAAEETEDGSYFVAQEKGLRTQKQWLAFYAQSQGSIWVDKGAAEALSQHGKSLLLSGIVEAEGAFSYGDIVTVFDKESGKSLGKGRVQFGASALEDILRSQKAKGVLIYRDDWISITPEIQLLFTEF</sequence>
<gene>
    <name evidence="1" type="primary">proB</name>
    <name type="ordered locus">SPH_1040</name>
</gene>
<feature type="chain" id="PRO_1000125267" description="Glutamate 5-kinase">
    <location>
        <begin position="1"/>
        <end position="369"/>
    </location>
</feature>
<feature type="domain" description="PUA" evidence="1">
    <location>
        <begin position="275"/>
        <end position="355"/>
    </location>
</feature>
<feature type="binding site" evidence="1">
    <location>
        <position position="9"/>
    </location>
    <ligand>
        <name>ATP</name>
        <dbReference type="ChEBI" id="CHEBI:30616"/>
    </ligand>
</feature>
<feature type="binding site" evidence="1">
    <location>
        <position position="49"/>
    </location>
    <ligand>
        <name>substrate</name>
    </ligand>
</feature>
<feature type="binding site" evidence="1">
    <location>
        <position position="136"/>
    </location>
    <ligand>
        <name>substrate</name>
    </ligand>
</feature>
<feature type="binding site" evidence="1">
    <location>
        <position position="148"/>
    </location>
    <ligand>
        <name>substrate</name>
    </ligand>
</feature>
<feature type="binding site" evidence="1">
    <location>
        <begin position="168"/>
        <end position="169"/>
    </location>
    <ligand>
        <name>ATP</name>
        <dbReference type="ChEBI" id="CHEBI:30616"/>
    </ligand>
</feature>
<feature type="binding site" evidence="1">
    <location>
        <begin position="210"/>
        <end position="216"/>
    </location>
    <ligand>
        <name>ATP</name>
        <dbReference type="ChEBI" id="CHEBI:30616"/>
    </ligand>
</feature>
<keyword id="KW-0028">Amino-acid biosynthesis</keyword>
<keyword id="KW-0067">ATP-binding</keyword>
<keyword id="KW-0963">Cytoplasm</keyword>
<keyword id="KW-0418">Kinase</keyword>
<keyword id="KW-0547">Nucleotide-binding</keyword>
<keyword id="KW-0641">Proline biosynthesis</keyword>
<keyword id="KW-0808">Transferase</keyword>
<accession>B1IB99</accession>
<dbReference type="EC" id="2.7.2.11" evidence="1"/>
<dbReference type="EMBL" id="CP000936">
    <property type="protein sequence ID" value="ACA36040.1"/>
    <property type="molecule type" value="Genomic_DNA"/>
</dbReference>
<dbReference type="RefSeq" id="WP_000875751.1">
    <property type="nucleotide sequence ID" value="NC_010380.1"/>
</dbReference>
<dbReference type="SMR" id="B1IB99"/>
<dbReference type="KEGG" id="spv:SPH_1040"/>
<dbReference type="HOGENOM" id="CLU_025400_2_0_9"/>
<dbReference type="UniPathway" id="UPA00098">
    <property type="reaction ID" value="UER00359"/>
</dbReference>
<dbReference type="Proteomes" id="UP000002163">
    <property type="component" value="Chromosome"/>
</dbReference>
<dbReference type="GO" id="GO:0005829">
    <property type="term" value="C:cytosol"/>
    <property type="evidence" value="ECO:0007669"/>
    <property type="project" value="TreeGrafter"/>
</dbReference>
<dbReference type="GO" id="GO:0005524">
    <property type="term" value="F:ATP binding"/>
    <property type="evidence" value="ECO:0007669"/>
    <property type="project" value="UniProtKB-KW"/>
</dbReference>
<dbReference type="GO" id="GO:0004349">
    <property type="term" value="F:glutamate 5-kinase activity"/>
    <property type="evidence" value="ECO:0007669"/>
    <property type="project" value="UniProtKB-UniRule"/>
</dbReference>
<dbReference type="GO" id="GO:0003723">
    <property type="term" value="F:RNA binding"/>
    <property type="evidence" value="ECO:0007669"/>
    <property type="project" value="InterPro"/>
</dbReference>
<dbReference type="GO" id="GO:0055129">
    <property type="term" value="P:L-proline biosynthetic process"/>
    <property type="evidence" value="ECO:0007669"/>
    <property type="project" value="UniProtKB-UniRule"/>
</dbReference>
<dbReference type="CDD" id="cd04242">
    <property type="entry name" value="AAK_G5K_ProB"/>
    <property type="match status" value="1"/>
</dbReference>
<dbReference type="CDD" id="cd21157">
    <property type="entry name" value="PUA_G5K"/>
    <property type="match status" value="1"/>
</dbReference>
<dbReference type="FunFam" id="2.30.130.10:FF:000011">
    <property type="entry name" value="Glutamate 5-kinase"/>
    <property type="match status" value="1"/>
</dbReference>
<dbReference type="FunFam" id="3.40.1160.10:FF:000018">
    <property type="entry name" value="Glutamate 5-kinase"/>
    <property type="match status" value="1"/>
</dbReference>
<dbReference type="Gene3D" id="3.40.1160.10">
    <property type="entry name" value="Acetylglutamate kinase-like"/>
    <property type="match status" value="1"/>
</dbReference>
<dbReference type="Gene3D" id="2.30.130.10">
    <property type="entry name" value="PUA domain"/>
    <property type="match status" value="1"/>
</dbReference>
<dbReference type="HAMAP" id="MF_00456">
    <property type="entry name" value="ProB"/>
    <property type="match status" value="1"/>
</dbReference>
<dbReference type="InterPro" id="IPR036393">
    <property type="entry name" value="AceGlu_kinase-like_sf"/>
</dbReference>
<dbReference type="InterPro" id="IPR001048">
    <property type="entry name" value="Asp/Glu/Uridylate_kinase"/>
</dbReference>
<dbReference type="InterPro" id="IPR041739">
    <property type="entry name" value="G5K_ProB"/>
</dbReference>
<dbReference type="InterPro" id="IPR001057">
    <property type="entry name" value="Glu/AcGlu_kinase"/>
</dbReference>
<dbReference type="InterPro" id="IPR011529">
    <property type="entry name" value="Glu_5kinase"/>
</dbReference>
<dbReference type="InterPro" id="IPR005715">
    <property type="entry name" value="Glu_5kinase/COase_Synthase"/>
</dbReference>
<dbReference type="InterPro" id="IPR019797">
    <property type="entry name" value="Glutamate_5-kinase_CS"/>
</dbReference>
<dbReference type="InterPro" id="IPR002478">
    <property type="entry name" value="PUA"/>
</dbReference>
<dbReference type="InterPro" id="IPR015947">
    <property type="entry name" value="PUA-like_sf"/>
</dbReference>
<dbReference type="InterPro" id="IPR036974">
    <property type="entry name" value="PUA_sf"/>
</dbReference>
<dbReference type="NCBIfam" id="TIGR01027">
    <property type="entry name" value="proB"/>
    <property type="match status" value="1"/>
</dbReference>
<dbReference type="PANTHER" id="PTHR43654">
    <property type="entry name" value="GLUTAMATE 5-KINASE"/>
    <property type="match status" value="1"/>
</dbReference>
<dbReference type="PANTHER" id="PTHR43654:SF1">
    <property type="entry name" value="ISOPENTENYL PHOSPHATE KINASE"/>
    <property type="match status" value="1"/>
</dbReference>
<dbReference type="Pfam" id="PF00696">
    <property type="entry name" value="AA_kinase"/>
    <property type="match status" value="1"/>
</dbReference>
<dbReference type="Pfam" id="PF01472">
    <property type="entry name" value="PUA"/>
    <property type="match status" value="1"/>
</dbReference>
<dbReference type="PIRSF" id="PIRSF000729">
    <property type="entry name" value="GK"/>
    <property type="match status" value="1"/>
</dbReference>
<dbReference type="PRINTS" id="PR00474">
    <property type="entry name" value="GLU5KINASE"/>
</dbReference>
<dbReference type="SMART" id="SM00359">
    <property type="entry name" value="PUA"/>
    <property type="match status" value="1"/>
</dbReference>
<dbReference type="SUPFAM" id="SSF53633">
    <property type="entry name" value="Carbamate kinase-like"/>
    <property type="match status" value="1"/>
</dbReference>
<dbReference type="SUPFAM" id="SSF88697">
    <property type="entry name" value="PUA domain-like"/>
    <property type="match status" value="1"/>
</dbReference>
<dbReference type="PROSITE" id="PS00902">
    <property type="entry name" value="GLUTAMATE_5_KINASE"/>
    <property type="match status" value="1"/>
</dbReference>
<dbReference type="PROSITE" id="PS50890">
    <property type="entry name" value="PUA"/>
    <property type="match status" value="1"/>
</dbReference>
<comment type="function">
    <text evidence="1">Catalyzes the transfer of a phosphate group to glutamate to form L-glutamate 5-phosphate.</text>
</comment>
<comment type="catalytic activity">
    <reaction evidence="1">
        <text>L-glutamate + ATP = L-glutamyl 5-phosphate + ADP</text>
        <dbReference type="Rhea" id="RHEA:14877"/>
        <dbReference type="ChEBI" id="CHEBI:29985"/>
        <dbReference type="ChEBI" id="CHEBI:30616"/>
        <dbReference type="ChEBI" id="CHEBI:58274"/>
        <dbReference type="ChEBI" id="CHEBI:456216"/>
        <dbReference type="EC" id="2.7.2.11"/>
    </reaction>
</comment>
<comment type="pathway">
    <text evidence="1">Amino-acid biosynthesis; L-proline biosynthesis; L-glutamate 5-semialdehyde from L-glutamate: step 1/2.</text>
</comment>
<comment type="subcellular location">
    <subcellularLocation>
        <location evidence="1">Cytoplasm</location>
    </subcellularLocation>
</comment>
<comment type="similarity">
    <text evidence="1">Belongs to the glutamate 5-kinase family.</text>
</comment>